<gene>
    <name type="primary">HOXC10</name>
</gene>
<reference key="1">
    <citation type="submission" date="2006-08" db="EMBL/GenBank/DDBJ databases">
        <title>Positive selection in transcription factor genes on the human lineage.</title>
        <authorList>
            <person name="Nickel G.C."/>
            <person name="Tefft D.L."/>
            <person name="Trevarthen K."/>
            <person name="Funt J."/>
            <person name="Adams M.D."/>
        </authorList>
    </citation>
    <scope>NUCLEOTIDE SEQUENCE [GENOMIC DNA]</scope>
</reference>
<protein>
    <recommendedName>
        <fullName>Homeobox protein Hox-C10</fullName>
    </recommendedName>
</protein>
<dbReference type="EMBL" id="DQ977478">
    <property type="protein sequence ID" value="ABM89255.1"/>
    <property type="molecule type" value="Genomic_DNA"/>
</dbReference>
<dbReference type="GO" id="GO:0005634">
    <property type="term" value="C:nucleus"/>
    <property type="evidence" value="ECO:0007669"/>
    <property type="project" value="UniProtKB-SubCell"/>
</dbReference>
<dbReference type="GO" id="GO:0000981">
    <property type="term" value="F:DNA-binding transcription factor activity, RNA polymerase II-specific"/>
    <property type="evidence" value="ECO:0007669"/>
    <property type="project" value="InterPro"/>
</dbReference>
<dbReference type="GO" id="GO:0000978">
    <property type="term" value="F:RNA polymerase II cis-regulatory region sequence-specific DNA binding"/>
    <property type="evidence" value="ECO:0007669"/>
    <property type="project" value="TreeGrafter"/>
</dbReference>
<dbReference type="CDD" id="cd00086">
    <property type="entry name" value="homeodomain"/>
    <property type="match status" value="1"/>
</dbReference>
<dbReference type="FunFam" id="1.10.10.60:FF:000018">
    <property type="entry name" value="Homeobox A10"/>
    <property type="match status" value="1"/>
</dbReference>
<dbReference type="Gene3D" id="1.10.10.60">
    <property type="entry name" value="Homeodomain-like"/>
    <property type="match status" value="1"/>
</dbReference>
<dbReference type="InterPro" id="IPR001356">
    <property type="entry name" value="HD"/>
</dbReference>
<dbReference type="InterPro" id="IPR020479">
    <property type="entry name" value="HD_metazoa"/>
</dbReference>
<dbReference type="InterPro" id="IPR017970">
    <property type="entry name" value="Homeobox_CS"/>
</dbReference>
<dbReference type="InterPro" id="IPR009057">
    <property type="entry name" value="Homeodomain-like_sf"/>
</dbReference>
<dbReference type="InterPro" id="IPR046333">
    <property type="entry name" value="HXA10/ABDB-like"/>
</dbReference>
<dbReference type="PANTHER" id="PTHR45874">
    <property type="entry name" value="HOMEOBOX PROTEIN ABDOMINAL-B"/>
    <property type="match status" value="1"/>
</dbReference>
<dbReference type="PANTHER" id="PTHR45874:SF2">
    <property type="entry name" value="HOMEOBOX PROTEIN HOX-C10"/>
    <property type="match status" value="1"/>
</dbReference>
<dbReference type="Pfam" id="PF00046">
    <property type="entry name" value="Homeodomain"/>
    <property type="match status" value="1"/>
</dbReference>
<dbReference type="PRINTS" id="PR00024">
    <property type="entry name" value="HOMEOBOX"/>
</dbReference>
<dbReference type="SMART" id="SM00389">
    <property type="entry name" value="HOX"/>
    <property type="match status" value="1"/>
</dbReference>
<dbReference type="SUPFAM" id="SSF46689">
    <property type="entry name" value="Homeodomain-like"/>
    <property type="match status" value="1"/>
</dbReference>
<dbReference type="PROSITE" id="PS00027">
    <property type="entry name" value="HOMEOBOX_1"/>
    <property type="match status" value="1"/>
</dbReference>
<dbReference type="PROSITE" id="PS50071">
    <property type="entry name" value="HOMEOBOX_2"/>
    <property type="match status" value="1"/>
</dbReference>
<name>HXC10_PONPY</name>
<proteinExistence type="inferred from homology"/>
<sequence>MTCPRNVTPNSYSEXLAAPGGEERYSRSAGMYMXXGSDFXCGVMRGCGLAPSLSKRXXGGSPSLALNTYPSYLSQLDSWGDPKAAYRLEQPVGRPLSSCSYPPSVKEENVCCMYSAEKRAKSGPEAALYSHPLPESCLGEHEVPVPSYYRASPNYSALDKTPHCSGANDFEAPFEQRASLNPRTEHLESPQLGGKVSFPETPKSDSQTPSPNEIKTEQSLAGAKGSPSESEKERAKTADSSPDTSDNEAKEEIKAENTTGNWLTAKSGRKKRCPYTKHQTLELEKEFLFNMYLTRERRLEISKTINLTDRQVKIWFQNRRMKLKKMNRENRIRELTSNFNFT</sequence>
<comment type="function">
    <text evidence="1">Sequence-specific transcription factor which is part of a developmental regulatory system that provides cells with specific positional identities on the anterior-posterior axis.</text>
</comment>
<comment type="subcellular location">
    <subcellularLocation>
        <location evidence="3">Nucleus</location>
    </subcellularLocation>
</comment>
<comment type="similarity">
    <text evidence="5">Belongs to the Abd-B homeobox family.</text>
</comment>
<feature type="chain" id="PRO_0000285431" description="Homeobox protein Hox-C10">
    <location>
        <begin position="1"/>
        <end position="342"/>
    </location>
</feature>
<feature type="DNA-binding region" description="Homeobox" evidence="3">
    <location>
        <begin position="268"/>
        <end position="327"/>
    </location>
</feature>
<feature type="region of interest" description="Disordered" evidence="4">
    <location>
        <begin position="185"/>
        <end position="271"/>
    </location>
</feature>
<feature type="compositionally biased region" description="Polar residues" evidence="4">
    <location>
        <begin position="204"/>
        <end position="219"/>
    </location>
</feature>
<feature type="modified residue" description="Phosphothreonine" evidence="2">
    <location>
        <position position="8"/>
    </location>
</feature>
<feature type="modified residue" description="Phosphoserine" evidence="2">
    <location>
        <position position="189"/>
    </location>
</feature>
<feature type="cross-link" description="Glycyl lysine isopeptide (Lys-Gly) (interchain with G-Cter in SUMO2)" evidence="2">
    <location>
        <position position="106"/>
    </location>
</feature>
<feature type="cross-link" description="Glycyl lysine isopeptide (Lys-Gly) (interchain with G-Cter in SUMO2)" evidence="2">
    <location>
        <position position="195"/>
    </location>
</feature>
<feature type="cross-link" description="Glycyl lysine isopeptide (Lys-Gly) (interchain with G-Cter in SUMO2)" evidence="2">
    <location>
        <position position="254"/>
    </location>
</feature>
<accession>A2T7H7</accession>
<keyword id="KW-0217">Developmental protein</keyword>
<keyword id="KW-0238">DNA-binding</keyword>
<keyword id="KW-0371">Homeobox</keyword>
<keyword id="KW-1017">Isopeptide bond</keyword>
<keyword id="KW-0539">Nucleus</keyword>
<keyword id="KW-0597">Phosphoprotein</keyword>
<keyword id="KW-0804">Transcription</keyword>
<keyword id="KW-0805">Transcription regulation</keyword>
<keyword id="KW-0832">Ubl conjugation</keyword>
<evidence type="ECO:0000250" key="1"/>
<evidence type="ECO:0000250" key="2">
    <source>
        <dbReference type="UniProtKB" id="Q9NYD6"/>
    </source>
</evidence>
<evidence type="ECO:0000255" key="3">
    <source>
        <dbReference type="PROSITE-ProRule" id="PRU00108"/>
    </source>
</evidence>
<evidence type="ECO:0000256" key="4">
    <source>
        <dbReference type="SAM" id="MobiDB-lite"/>
    </source>
</evidence>
<evidence type="ECO:0000305" key="5"/>
<organism>
    <name type="scientific">Pongo pygmaeus</name>
    <name type="common">Bornean orangutan</name>
    <dbReference type="NCBI Taxonomy" id="9600"/>
    <lineage>
        <taxon>Eukaryota</taxon>
        <taxon>Metazoa</taxon>
        <taxon>Chordata</taxon>
        <taxon>Craniata</taxon>
        <taxon>Vertebrata</taxon>
        <taxon>Euteleostomi</taxon>
        <taxon>Mammalia</taxon>
        <taxon>Eutheria</taxon>
        <taxon>Euarchontoglires</taxon>
        <taxon>Primates</taxon>
        <taxon>Haplorrhini</taxon>
        <taxon>Catarrhini</taxon>
        <taxon>Hominidae</taxon>
        <taxon>Pongo</taxon>
    </lineage>
</organism>